<accession>G2K047</accession>
<accession>Q76N48</accession>
<accession>Q9S5A5</accession>
<organism>
    <name type="scientific">Listeria monocytogenes serotype 1/2a (strain 10403S)</name>
    <dbReference type="NCBI Taxonomy" id="393133"/>
    <lineage>
        <taxon>Bacteria</taxon>
        <taxon>Bacillati</taxon>
        <taxon>Bacillota</taxon>
        <taxon>Bacilli</taxon>
        <taxon>Bacillales</taxon>
        <taxon>Listeriaceae</taxon>
        <taxon>Listeria</taxon>
    </lineage>
</organism>
<gene>
    <name evidence="1" type="primary">grpE</name>
    <name type="ordered locus">LMRG_00927</name>
</gene>
<comment type="function">
    <text evidence="1">Participates actively in the response to hyperosmotic and heat shock by preventing the aggregation of stress-denatured proteins, in association with DnaK and GrpE. It is the nucleotide exchange factor for DnaK and may function as a thermosensor. Unfolded proteins bind initially to DnaJ; upon interaction with the DnaJ-bound protein, DnaK hydrolyzes its bound ATP, resulting in the formation of a stable complex. GrpE releases ADP from DnaK; ATP binding to DnaK triggers the release of the substrate protein, thus completing the reaction cycle. Several rounds of ATP-dependent interactions between DnaJ, DnaK and GrpE are required for fully efficient folding.</text>
</comment>
<comment type="subunit">
    <text evidence="1">Homodimer.</text>
</comment>
<comment type="subcellular location">
    <subcellularLocation>
        <location evidence="1">Cytoplasm</location>
    </subcellularLocation>
</comment>
<comment type="similarity">
    <text evidence="1">Belongs to the GrpE family.</text>
</comment>
<keyword id="KW-0143">Chaperone</keyword>
<keyword id="KW-0963">Cytoplasm</keyword>
<keyword id="KW-0346">Stress response</keyword>
<evidence type="ECO:0000255" key="1">
    <source>
        <dbReference type="HAMAP-Rule" id="MF_01151"/>
    </source>
</evidence>
<reference key="1">
    <citation type="journal article" date="2000" name="Cell Stress Chaperones">
        <title>Cloning, sequencing, and transcriptional analysis of the dnaK heat shock operon of Listeria monocytogenes.</title>
        <authorList>
            <person name="Hanawa T."/>
            <person name="Kai M."/>
            <person name="Kamiya S."/>
            <person name="Yamamoto T."/>
        </authorList>
    </citation>
    <scope>NUCLEOTIDE SEQUENCE [GENOMIC DNA]</scope>
    <source>
        <strain>10403S</strain>
    </source>
</reference>
<reference key="2">
    <citation type="submission" date="2010-04" db="EMBL/GenBank/DDBJ databases">
        <title>The genome sequence of Listeria monocytogenes strain 10403S.</title>
        <authorList>
            <consortium name="The Broad Institute Genome Sequencing Platform"/>
            <consortium name="The Broad Institute Genome Sequencing Center for Infectious Disease"/>
            <person name="Borowsky M."/>
            <person name="Borodovsky M."/>
            <person name="Young S.K."/>
            <person name="Zeng Q."/>
            <person name="Koehrsen M."/>
            <person name="Fitzgerald M."/>
            <person name="Wiedmann M."/>
            <person name="Swaminathan B."/>
            <person name="Lauer P."/>
            <person name="Portnoy D."/>
            <person name="Cossart P."/>
            <person name="Buchrieser C."/>
            <person name="Higgins D."/>
            <person name="Abouelleil A."/>
            <person name="Alvarado L."/>
            <person name="Arachchi H.M."/>
            <person name="Berlin A."/>
            <person name="Borenstein D."/>
            <person name="Brown A."/>
            <person name="Chapman S.B."/>
            <person name="Chen Z."/>
            <person name="Dunbar C.D."/>
            <person name="Engels R."/>
            <person name="Freedman E."/>
            <person name="Gearin G."/>
            <person name="Gellesch M."/>
            <person name="Goldberg J."/>
            <person name="Griggs A."/>
            <person name="Gujja S."/>
            <person name="Heilman E."/>
            <person name="Heiman D."/>
            <person name="Howarth C."/>
            <person name="Jen D."/>
            <person name="Larson L."/>
            <person name="Lui A."/>
            <person name="MacDonald J."/>
            <person name="Mehta T."/>
            <person name="Montmayeur A."/>
            <person name="Neiman D."/>
            <person name="Park D."/>
            <person name="Pearson M."/>
            <person name="Priest M."/>
            <person name="Richards J."/>
            <person name="Roberts A."/>
            <person name="Saif S."/>
            <person name="Shea T."/>
            <person name="Shenoy N."/>
            <person name="Sisk P."/>
            <person name="Stolte C."/>
            <person name="Sykes S."/>
            <person name="Walk T."/>
            <person name="White J."/>
            <person name="Yandava C."/>
            <person name="Haas B."/>
            <person name="Nusbaum C."/>
            <person name="Birren B."/>
        </authorList>
    </citation>
    <scope>NUCLEOTIDE SEQUENCE [LARGE SCALE GENOMIC DNA]</scope>
    <source>
        <strain>10403S</strain>
    </source>
</reference>
<feature type="chain" id="PRO_0000418523" description="Protein GrpE">
    <location>
        <begin position="1"/>
        <end position="191"/>
    </location>
</feature>
<proteinExistence type="inferred from homology"/>
<sequence>MSEKKNKKERLADEIEQEELNILDEAEEAVEEEATADTLTEEQAKILELENKLDEVENRYLRMQADFENVKKRHIADRDASQKYRSQSLAQDLLPALDSFEKALATTSDQEEVKQILKGMEMVYNQILIAFEKEGIEVIPAVGEQFDPNFHQAVMQDSDENAGSNEITAELQKGYKLKDRVIRPSMVKVNQ</sequence>
<name>GRPE_LISM4</name>
<protein>
    <recommendedName>
        <fullName evidence="1">Protein GrpE</fullName>
    </recommendedName>
    <alternativeName>
        <fullName evidence="1">HSP-70 cofactor</fullName>
    </alternativeName>
</protein>
<dbReference type="EMBL" id="AB023064">
    <property type="protein sequence ID" value="BAA82788.1"/>
    <property type="molecule type" value="Genomic_DNA"/>
</dbReference>
<dbReference type="EMBL" id="AB007771">
    <property type="protein sequence ID" value="BAD07396.1"/>
    <property type="molecule type" value="Genomic_DNA"/>
</dbReference>
<dbReference type="EMBL" id="CP002002">
    <property type="protein sequence ID" value="AEO06459.1"/>
    <property type="molecule type" value="Genomic_DNA"/>
</dbReference>
<dbReference type="PIR" id="T43737">
    <property type="entry name" value="T43737"/>
</dbReference>
<dbReference type="RefSeq" id="WP_003721982.1">
    <property type="nucleotide sequence ID" value="NC_017544.1"/>
</dbReference>
<dbReference type="SMR" id="G2K047"/>
<dbReference type="KEGG" id="lmt:LMRG_00927"/>
<dbReference type="HOGENOM" id="CLU_057217_5_2_9"/>
<dbReference type="Proteomes" id="UP000001288">
    <property type="component" value="Chromosome"/>
</dbReference>
<dbReference type="GO" id="GO:0005737">
    <property type="term" value="C:cytoplasm"/>
    <property type="evidence" value="ECO:0007669"/>
    <property type="project" value="UniProtKB-SubCell"/>
</dbReference>
<dbReference type="GO" id="GO:0000774">
    <property type="term" value="F:adenyl-nucleotide exchange factor activity"/>
    <property type="evidence" value="ECO:0007669"/>
    <property type="project" value="InterPro"/>
</dbReference>
<dbReference type="GO" id="GO:0042803">
    <property type="term" value="F:protein homodimerization activity"/>
    <property type="evidence" value="ECO:0007669"/>
    <property type="project" value="InterPro"/>
</dbReference>
<dbReference type="GO" id="GO:0051087">
    <property type="term" value="F:protein-folding chaperone binding"/>
    <property type="evidence" value="ECO:0007669"/>
    <property type="project" value="InterPro"/>
</dbReference>
<dbReference type="GO" id="GO:0051082">
    <property type="term" value="F:unfolded protein binding"/>
    <property type="evidence" value="ECO:0007669"/>
    <property type="project" value="TreeGrafter"/>
</dbReference>
<dbReference type="GO" id="GO:0006457">
    <property type="term" value="P:protein folding"/>
    <property type="evidence" value="ECO:0007669"/>
    <property type="project" value="InterPro"/>
</dbReference>
<dbReference type="CDD" id="cd00446">
    <property type="entry name" value="GrpE"/>
    <property type="match status" value="1"/>
</dbReference>
<dbReference type="FunFam" id="2.30.22.10:FF:000001">
    <property type="entry name" value="Protein GrpE"/>
    <property type="match status" value="1"/>
</dbReference>
<dbReference type="FunFam" id="3.90.20.20:FF:000002">
    <property type="entry name" value="Protein GrpE"/>
    <property type="match status" value="1"/>
</dbReference>
<dbReference type="Gene3D" id="3.90.20.20">
    <property type="match status" value="1"/>
</dbReference>
<dbReference type="Gene3D" id="2.30.22.10">
    <property type="entry name" value="Head domain of nucleotide exchange factor GrpE"/>
    <property type="match status" value="1"/>
</dbReference>
<dbReference type="HAMAP" id="MF_01151">
    <property type="entry name" value="GrpE"/>
    <property type="match status" value="1"/>
</dbReference>
<dbReference type="InterPro" id="IPR000740">
    <property type="entry name" value="GrpE"/>
</dbReference>
<dbReference type="InterPro" id="IPR013805">
    <property type="entry name" value="GrpE_coiled_coil"/>
</dbReference>
<dbReference type="InterPro" id="IPR009012">
    <property type="entry name" value="GrpE_head"/>
</dbReference>
<dbReference type="NCBIfam" id="NF010738">
    <property type="entry name" value="PRK14140.1"/>
    <property type="match status" value="1"/>
</dbReference>
<dbReference type="PANTHER" id="PTHR21237">
    <property type="entry name" value="GRPE PROTEIN"/>
    <property type="match status" value="1"/>
</dbReference>
<dbReference type="PANTHER" id="PTHR21237:SF23">
    <property type="entry name" value="GRPE PROTEIN HOMOLOG, MITOCHONDRIAL"/>
    <property type="match status" value="1"/>
</dbReference>
<dbReference type="Pfam" id="PF01025">
    <property type="entry name" value="GrpE"/>
    <property type="match status" value="1"/>
</dbReference>
<dbReference type="PRINTS" id="PR00773">
    <property type="entry name" value="GRPEPROTEIN"/>
</dbReference>
<dbReference type="SUPFAM" id="SSF58014">
    <property type="entry name" value="Coiled-coil domain of nucleotide exchange factor GrpE"/>
    <property type="match status" value="1"/>
</dbReference>
<dbReference type="SUPFAM" id="SSF51064">
    <property type="entry name" value="Head domain of nucleotide exchange factor GrpE"/>
    <property type="match status" value="1"/>
</dbReference>
<dbReference type="PROSITE" id="PS01071">
    <property type="entry name" value="GRPE"/>
    <property type="match status" value="1"/>
</dbReference>